<protein>
    <recommendedName>
        <fullName>Dihydrofolate reductase type A13</fullName>
        <ecNumber>1.5.1.3</ecNumber>
    </recommendedName>
    <alternativeName>
        <fullName>Dihydrofolate reductase type XIII</fullName>
        <shortName>DHFRXIII</shortName>
    </alternativeName>
</protein>
<accession>Q59408</accession>
<feature type="chain" id="PRO_0000186429" description="Dihydrofolate reductase type A13">
    <location>
        <begin position="1"/>
        <end position="165"/>
    </location>
</feature>
<feature type="domain" description="DHFR" evidence="2">
    <location>
        <begin position="7"/>
        <end position="162"/>
    </location>
</feature>
<name>DYR13_ECOLX</name>
<comment type="function">
    <text evidence="1">Key enzyme in folate metabolism. Catalyzes an essential reaction for de novo glycine and purine synthesis, and for DNA precursor synthesis (By similarity).</text>
</comment>
<comment type="catalytic activity">
    <reaction evidence="2">
        <text>(6S)-5,6,7,8-tetrahydrofolate + NADP(+) = 7,8-dihydrofolate + NADPH + H(+)</text>
        <dbReference type="Rhea" id="RHEA:15009"/>
        <dbReference type="ChEBI" id="CHEBI:15378"/>
        <dbReference type="ChEBI" id="CHEBI:57451"/>
        <dbReference type="ChEBI" id="CHEBI:57453"/>
        <dbReference type="ChEBI" id="CHEBI:57783"/>
        <dbReference type="ChEBI" id="CHEBI:58349"/>
        <dbReference type="EC" id="1.5.1.3"/>
    </reaction>
</comment>
<comment type="pathway">
    <text>Cofactor biosynthesis; tetrahydrofolate biosynthesis; 5,6,7,8-tetrahydrofolate from 7,8-dihydrofolate: step 1/1.</text>
</comment>
<comment type="subunit">
    <text evidence="1">Homodimer.</text>
</comment>
<comment type="similarity">
    <text evidence="3">Belongs to the dihydrofolate reductase family.</text>
</comment>
<dbReference type="EC" id="1.5.1.3"/>
<dbReference type="EMBL" id="Z50802">
    <property type="protein sequence ID" value="CAA90683.1"/>
    <property type="molecule type" value="Genomic_DNA"/>
</dbReference>
<dbReference type="PIR" id="S60665">
    <property type="entry name" value="S60665"/>
</dbReference>
<dbReference type="RefSeq" id="WP_063844334.1">
    <property type="nucleotide sequence ID" value="NG_047693.1"/>
</dbReference>
<dbReference type="SMR" id="Q59408"/>
<dbReference type="CARD" id="ARO:3003012">
    <property type="molecule name" value="dfrA13"/>
    <property type="mechanism identifier" value="ARO:0001002"/>
    <property type="mechanism name" value="antibiotic target replacement"/>
</dbReference>
<dbReference type="KEGG" id="ag:CAA90683"/>
<dbReference type="UniPathway" id="UPA00077">
    <property type="reaction ID" value="UER00158"/>
</dbReference>
<dbReference type="GO" id="GO:0005829">
    <property type="term" value="C:cytosol"/>
    <property type="evidence" value="ECO:0007669"/>
    <property type="project" value="TreeGrafter"/>
</dbReference>
<dbReference type="GO" id="GO:0004146">
    <property type="term" value="F:dihydrofolate reductase activity"/>
    <property type="evidence" value="ECO:0007669"/>
    <property type="project" value="UniProtKB-EC"/>
</dbReference>
<dbReference type="GO" id="GO:0050661">
    <property type="term" value="F:NADP binding"/>
    <property type="evidence" value="ECO:0007669"/>
    <property type="project" value="InterPro"/>
</dbReference>
<dbReference type="GO" id="GO:0046452">
    <property type="term" value="P:dihydrofolate metabolic process"/>
    <property type="evidence" value="ECO:0007669"/>
    <property type="project" value="TreeGrafter"/>
</dbReference>
<dbReference type="GO" id="GO:0046655">
    <property type="term" value="P:folic acid metabolic process"/>
    <property type="evidence" value="ECO:0007669"/>
    <property type="project" value="TreeGrafter"/>
</dbReference>
<dbReference type="GO" id="GO:0006730">
    <property type="term" value="P:one-carbon metabolic process"/>
    <property type="evidence" value="ECO:0007669"/>
    <property type="project" value="UniProtKB-KW"/>
</dbReference>
<dbReference type="GO" id="GO:0046677">
    <property type="term" value="P:response to antibiotic"/>
    <property type="evidence" value="ECO:0007669"/>
    <property type="project" value="UniProtKB-KW"/>
</dbReference>
<dbReference type="GO" id="GO:0031427">
    <property type="term" value="P:response to methotrexate"/>
    <property type="evidence" value="ECO:0007669"/>
    <property type="project" value="UniProtKB-KW"/>
</dbReference>
<dbReference type="GO" id="GO:0046654">
    <property type="term" value="P:tetrahydrofolate biosynthetic process"/>
    <property type="evidence" value="ECO:0007669"/>
    <property type="project" value="UniProtKB-UniPathway"/>
</dbReference>
<dbReference type="CDD" id="cd00209">
    <property type="entry name" value="DHFR"/>
    <property type="match status" value="1"/>
</dbReference>
<dbReference type="Gene3D" id="3.40.430.10">
    <property type="entry name" value="Dihydrofolate Reductase, subunit A"/>
    <property type="match status" value="1"/>
</dbReference>
<dbReference type="InterPro" id="IPR012259">
    <property type="entry name" value="DHFR"/>
</dbReference>
<dbReference type="InterPro" id="IPR024072">
    <property type="entry name" value="DHFR-like_dom_sf"/>
</dbReference>
<dbReference type="InterPro" id="IPR017925">
    <property type="entry name" value="DHFR_CS"/>
</dbReference>
<dbReference type="InterPro" id="IPR001796">
    <property type="entry name" value="DHFR_dom"/>
</dbReference>
<dbReference type="NCBIfam" id="NF000055">
    <property type="entry name" value="trim_DfrA12_A21"/>
    <property type="match status" value="1"/>
</dbReference>
<dbReference type="PANTHER" id="PTHR48069">
    <property type="entry name" value="DIHYDROFOLATE REDUCTASE"/>
    <property type="match status" value="1"/>
</dbReference>
<dbReference type="PANTHER" id="PTHR48069:SF3">
    <property type="entry name" value="DIHYDROFOLATE REDUCTASE"/>
    <property type="match status" value="1"/>
</dbReference>
<dbReference type="Pfam" id="PF00186">
    <property type="entry name" value="DHFR_1"/>
    <property type="match status" value="1"/>
</dbReference>
<dbReference type="PIRSF" id="PIRSF000194">
    <property type="entry name" value="DHFR"/>
    <property type="match status" value="1"/>
</dbReference>
<dbReference type="PRINTS" id="PR00070">
    <property type="entry name" value="DHFR"/>
</dbReference>
<dbReference type="SUPFAM" id="SSF53597">
    <property type="entry name" value="Dihydrofolate reductase-like"/>
    <property type="match status" value="1"/>
</dbReference>
<dbReference type="PROSITE" id="PS00075">
    <property type="entry name" value="DHFR_1"/>
    <property type="match status" value="1"/>
</dbReference>
<dbReference type="PROSITE" id="PS51330">
    <property type="entry name" value="DHFR_2"/>
    <property type="match status" value="1"/>
</dbReference>
<organism>
    <name type="scientific">Escherichia coli</name>
    <dbReference type="NCBI Taxonomy" id="562"/>
    <lineage>
        <taxon>Bacteria</taxon>
        <taxon>Pseudomonadati</taxon>
        <taxon>Pseudomonadota</taxon>
        <taxon>Gammaproteobacteria</taxon>
        <taxon>Enterobacterales</taxon>
        <taxon>Enterobacteriaceae</taxon>
        <taxon>Escherichia</taxon>
    </lineage>
</organism>
<keyword id="KW-0046">Antibiotic resistance</keyword>
<keyword id="KW-0487">Methotrexate resistance</keyword>
<keyword id="KW-0521">NADP</keyword>
<keyword id="KW-0554">One-carbon metabolism</keyword>
<keyword id="KW-0560">Oxidoreductase</keyword>
<keyword id="KW-0817">Trimethoprim resistance</keyword>
<sequence length="165" mass="17925">MNPESVRIYLVAAMGANRVIGNGPDIPWKIPGEQKIFRRLTESKVVVMGRKTFESIGKPLPNRHTVVLSRQAGYSAPGCAVVSTLSHVSPSTAEHGKELYVARGAEVYALALPHANGVFLSEVHQTFEGDAFFPVLNAAEFEVVSSETIQGTITYTHSVYARRNG</sequence>
<reference key="1">
    <citation type="journal article" date="2000" name="Antimicrob. Agents Chemother.">
        <title>New gene cassettes for trimethoprim resistance, dfr13, and Streptomycin-spectinomycin resistance, aadA4, inserted on a class 1 integron.</title>
        <authorList>
            <person name="Adrian P.V."/>
            <person name="Thomson C.J."/>
            <person name="Klugman K.P."/>
            <person name="Amyes S.G."/>
        </authorList>
    </citation>
    <scope>NUCLEOTIDE SEQUENCE [GENOMIC DNA]</scope>
    <source>
        <strain>RA33.2</strain>
    </source>
</reference>
<gene>
    <name type="primary">dfrA13</name>
    <name type="synonym">dfr13</name>
</gene>
<evidence type="ECO:0000250" key="1"/>
<evidence type="ECO:0000255" key="2">
    <source>
        <dbReference type="PROSITE-ProRule" id="PRU00660"/>
    </source>
</evidence>
<evidence type="ECO:0000305" key="3"/>
<proteinExistence type="inferred from homology"/>